<proteinExistence type="inferred from homology"/>
<evidence type="ECO:0000255" key="1">
    <source>
        <dbReference type="HAMAP-Rule" id="MF_00195"/>
    </source>
</evidence>
<comment type="function">
    <text evidence="1">GTPase that plays an essential role in the late steps of ribosome biogenesis.</text>
</comment>
<comment type="subunit">
    <text evidence="1">Associates with the 50S ribosomal subunit.</text>
</comment>
<comment type="similarity">
    <text evidence="1">Belongs to the TRAFAC class TrmE-Era-EngA-EngB-Septin-like GTPase superfamily. EngA (Der) GTPase family.</text>
</comment>
<reference key="1">
    <citation type="journal article" date="2000" name="Nature">
        <title>DNA sequence of both chromosomes of the cholera pathogen Vibrio cholerae.</title>
        <authorList>
            <person name="Heidelberg J.F."/>
            <person name="Eisen J.A."/>
            <person name="Nelson W.C."/>
            <person name="Clayton R.A."/>
            <person name="Gwinn M.L."/>
            <person name="Dodson R.J."/>
            <person name="Haft D.H."/>
            <person name="Hickey E.K."/>
            <person name="Peterson J.D."/>
            <person name="Umayam L.A."/>
            <person name="Gill S.R."/>
            <person name="Nelson K.E."/>
            <person name="Read T.D."/>
            <person name="Tettelin H."/>
            <person name="Richardson D.L."/>
            <person name="Ermolaeva M.D."/>
            <person name="Vamathevan J.J."/>
            <person name="Bass S."/>
            <person name="Qin H."/>
            <person name="Dragoi I."/>
            <person name="Sellers P."/>
            <person name="McDonald L.A."/>
            <person name="Utterback T.R."/>
            <person name="Fleischmann R.D."/>
            <person name="Nierman W.C."/>
            <person name="White O."/>
            <person name="Salzberg S.L."/>
            <person name="Smith H.O."/>
            <person name="Colwell R.R."/>
            <person name="Mekalanos J.J."/>
            <person name="Venter J.C."/>
            <person name="Fraser C.M."/>
        </authorList>
    </citation>
    <scope>NUCLEOTIDE SEQUENCE [LARGE SCALE GENOMIC DNA]</scope>
    <source>
        <strain>ATCC 39315 / El Tor Inaba N16961</strain>
    </source>
</reference>
<feature type="chain" id="PRO_0000179068" description="GTPase Der">
    <location>
        <begin position="1"/>
        <end position="494"/>
    </location>
</feature>
<feature type="domain" description="EngA-type G 1">
    <location>
        <begin position="3"/>
        <end position="166"/>
    </location>
</feature>
<feature type="domain" description="EngA-type G 2">
    <location>
        <begin position="206"/>
        <end position="379"/>
    </location>
</feature>
<feature type="domain" description="KH-like" evidence="1">
    <location>
        <begin position="380"/>
        <end position="464"/>
    </location>
</feature>
<feature type="binding site" evidence="1">
    <location>
        <begin position="9"/>
        <end position="16"/>
    </location>
    <ligand>
        <name>GTP</name>
        <dbReference type="ChEBI" id="CHEBI:37565"/>
        <label>1</label>
    </ligand>
</feature>
<feature type="binding site" evidence="1">
    <location>
        <begin position="56"/>
        <end position="60"/>
    </location>
    <ligand>
        <name>GTP</name>
        <dbReference type="ChEBI" id="CHEBI:37565"/>
        <label>1</label>
    </ligand>
</feature>
<feature type="binding site" evidence="1">
    <location>
        <begin position="118"/>
        <end position="121"/>
    </location>
    <ligand>
        <name>GTP</name>
        <dbReference type="ChEBI" id="CHEBI:37565"/>
        <label>1</label>
    </ligand>
</feature>
<feature type="binding site" evidence="1">
    <location>
        <begin position="212"/>
        <end position="219"/>
    </location>
    <ligand>
        <name>GTP</name>
        <dbReference type="ChEBI" id="CHEBI:37565"/>
        <label>2</label>
    </ligand>
</feature>
<feature type="binding site" evidence="1">
    <location>
        <begin position="259"/>
        <end position="263"/>
    </location>
    <ligand>
        <name>GTP</name>
        <dbReference type="ChEBI" id="CHEBI:37565"/>
        <label>2</label>
    </ligand>
</feature>
<feature type="binding site" evidence="1">
    <location>
        <begin position="324"/>
        <end position="327"/>
    </location>
    <ligand>
        <name>GTP</name>
        <dbReference type="ChEBI" id="CHEBI:37565"/>
        <label>2</label>
    </ligand>
</feature>
<protein>
    <recommendedName>
        <fullName evidence="1">GTPase Der</fullName>
    </recommendedName>
    <alternativeName>
        <fullName evidence="1">GTP-binding protein EngA</fullName>
    </alternativeName>
</protein>
<gene>
    <name evidence="1" type="primary">der</name>
    <name type="synonym">engA</name>
    <name type="ordered locus">VC_0763</name>
</gene>
<sequence>MVPVVALVGRPNVGKSTLFNRLTRTRDALVADFPGLTRDRKYGQAKLGEHEFIVIDTGGIDGSEEGVETKMAQQSLAAIDEADVVLFMVDGRAGLTVADEAIAQHLRRIEKPAILVVNKVDGIDADAASAEFWQLGMDQMYQIAAAHGRGVGALIDRVLNPFAEQMESEQAQLEDLTNEEDPEEEQLEYSEEEAEAEYKRLQDLPIKLAIIGRPNVGKSTLTNRILGEERVVVYDMPGTTRDSIYIPMKRDEREYVLIDTAGVRRRKRINETVEKFSVVKTLQAIEDANVVLLVVDARENISDQDLSLLGFALNSGRSIVIAVNKWDGLSFDVKEHVKKELDRRLGFVDFARIHFISALHGTGVGHLFESVQEAYRSATTRVGTSVLTRIMKMATDDHQPPMVRGRRVKLKYAHAGGYNPPIIVIHGNQVNELPDSYKRYLMNYYRKSLEIMGTPIRIQFQNSENPFEGKTNKMTLSQERQRKRLMSMVKNRRK</sequence>
<keyword id="KW-0342">GTP-binding</keyword>
<keyword id="KW-0547">Nucleotide-binding</keyword>
<keyword id="KW-1185">Reference proteome</keyword>
<keyword id="KW-0677">Repeat</keyword>
<keyword id="KW-0690">Ribosome biogenesis</keyword>
<dbReference type="EMBL" id="AE003852">
    <property type="protein sequence ID" value="AAF93928.1"/>
    <property type="molecule type" value="Genomic_DNA"/>
</dbReference>
<dbReference type="PIR" id="B82284">
    <property type="entry name" value="B82284"/>
</dbReference>
<dbReference type="RefSeq" id="NP_230412.1">
    <property type="nucleotide sequence ID" value="NC_002505.1"/>
</dbReference>
<dbReference type="RefSeq" id="WP_000249403.1">
    <property type="nucleotide sequence ID" value="NZ_LT906614.1"/>
</dbReference>
<dbReference type="SMR" id="Q9KTW7"/>
<dbReference type="STRING" id="243277.VC_0763"/>
<dbReference type="DNASU" id="2615306"/>
<dbReference type="EnsemblBacteria" id="AAF93928">
    <property type="protein sequence ID" value="AAF93928"/>
    <property type="gene ID" value="VC_0763"/>
</dbReference>
<dbReference type="KEGG" id="vch:VC_0763"/>
<dbReference type="PATRIC" id="fig|243277.26.peg.727"/>
<dbReference type="eggNOG" id="COG1160">
    <property type="taxonomic scope" value="Bacteria"/>
</dbReference>
<dbReference type="HOGENOM" id="CLU_016077_5_1_6"/>
<dbReference type="Proteomes" id="UP000000584">
    <property type="component" value="Chromosome 1"/>
</dbReference>
<dbReference type="GO" id="GO:0016887">
    <property type="term" value="F:ATP hydrolysis activity"/>
    <property type="evidence" value="ECO:0007669"/>
    <property type="project" value="InterPro"/>
</dbReference>
<dbReference type="GO" id="GO:0005525">
    <property type="term" value="F:GTP binding"/>
    <property type="evidence" value="ECO:0007669"/>
    <property type="project" value="UniProtKB-UniRule"/>
</dbReference>
<dbReference type="GO" id="GO:0043022">
    <property type="term" value="F:ribosome binding"/>
    <property type="evidence" value="ECO:0000318"/>
    <property type="project" value="GO_Central"/>
</dbReference>
<dbReference type="GO" id="GO:0042254">
    <property type="term" value="P:ribosome biogenesis"/>
    <property type="evidence" value="ECO:0007669"/>
    <property type="project" value="UniProtKB-KW"/>
</dbReference>
<dbReference type="CDD" id="cd01894">
    <property type="entry name" value="EngA1"/>
    <property type="match status" value="1"/>
</dbReference>
<dbReference type="CDD" id="cd01895">
    <property type="entry name" value="EngA2"/>
    <property type="match status" value="1"/>
</dbReference>
<dbReference type="FunFam" id="3.30.300.20:FF:000004">
    <property type="entry name" value="GTPase Der"/>
    <property type="match status" value="1"/>
</dbReference>
<dbReference type="FunFam" id="3.40.50.300:FF:000040">
    <property type="entry name" value="GTPase Der"/>
    <property type="match status" value="1"/>
</dbReference>
<dbReference type="FunFam" id="3.40.50.300:FF:000057">
    <property type="entry name" value="GTPase Der"/>
    <property type="match status" value="1"/>
</dbReference>
<dbReference type="Gene3D" id="3.30.300.20">
    <property type="match status" value="1"/>
</dbReference>
<dbReference type="Gene3D" id="3.40.50.300">
    <property type="entry name" value="P-loop containing nucleotide triphosphate hydrolases"/>
    <property type="match status" value="2"/>
</dbReference>
<dbReference type="HAMAP" id="MF_00195">
    <property type="entry name" value="GTPase_Der"/>
    <property type="match status" value="1"/>
</dbReference>
<dbReference type="InterPro" id="IPR003593">
    <property type="entry name" value="AAA+_ATPase"/>
</dbReference>
<dbReference type="InterPro" id="IPR031166">
    <property type="entry name" value="G_ENGA"/>
</dbReference>
<dbReference type="InterPro" id="IPR006073">
    <property type="entry name" value="GTP-bd"/>
</dbReference>
<dbReference type="InterPro" id="IPR016484">
    <property type="entry name" value="GTPase_Der"/>
</dbReference>
<dbReference type="InterPro" id="IPR032859">
    <property type="entry name" value="KH_dom-like"/>
</dbReference>
<dbReference type="InterPro" id="IPR015946">
    <property type="entry name" value="KH_dom-like_a/b"/>
</dbReference>
<dbReference type="InterPro" id="IPR027417">
    <property type="entry name" value="P-loop_NTPase"/>
</dbReference>
<dbReference type="InterPro" id="IPR005225">
    <property type="entry name" value="Small_GTP-bd"/>
</dbReference>
<dbReference type="NCBIfam" id="TIGR03594">
    <property type="entry name" value="GTPase_EngA"/>
    <property type="match status" value="1"/>
</dbReference>
<dbReference type="NCBIfam" id="TIGR00231">
    <property type="entry name" value="small_GTP"/>
    <property type="match status" value="2"/>
</dbReference>
<dbReference type="PANTHER" id="PTHR43834">
    <property type="entry name" value="GTPASE DER"/>
    <property type="match status" value="1"/>
</dbReference>
<dbReference type="PANTHER" id="PTHR43834:SF6">
    <property type="entry name" value="GTPASE DER"/>
    <property type="match status" value="1"/>
</dbReference>
<dbReference type="Pfam" id="PF14714">
    <property type="entry name" value="KH_dom-like"/>
    <property type="match status" value="1"/>
</dbReference>
<dbReference type="Pfam" id="PF01926">
    <property type="entry name" value="MMR_HSR1"/>
    <property type="match status" value="2"/>
</dbReference>
<dbReference type="PIRSF" id="PIRSF006485">
    <property type="entry name" value="GTP-binding_EngA"/>
    <property type="match status" value="1"/>
</dbReference>
<dbReference type="PRINTS" id="PR00326">
    <property type="entry name" value="GTP1OBG"/>
</dbReference>
<dbReference type="SMART" id="SM00382">
    <property type="entry name" value="AAA"/>
    <property type="match status" value="2"/>
</dbReference>
<dbReference type="SUPFAM" id="SSF52540">
    <property type="entry name" value="P-loop containing nucleoside triphosphate hydrolases"/>
    <property type="match status" value="2"/>
</dbReference>
<dbReference type="PROSITE" id="PS51712">
    <property type="entry name" value="G_ENGA"/>
    <property type="match status" value="2"/>
</dbReference>
<name>DER_VIBCH</name>
<organism>
    <name type="scientific">Vibrio cholerae serotype O1 (strain ATCC 39315 / El Tor Inaba N16961)</name>
    <dbReference type="NCBI Taxonomy" id="243277"/>
    <lineage>
        <taxon>Bacteria</taxon>
        <taxon>Pseudomonadati</taxon>
        <taxon>Pseudomonadota</taxon>
        <taxon>Gammaproteobacteria</taxon>
        <taxon>Vibrionales</taxon>
        <taxon>Vibrionaceae</taxon>
        <taxon>Vibrio</taxon>
    </lineage>
</organism>
<accession>Q9KTW7</accession>